<feature type="peptide" id="PRO_0000044034" description="Agglutinin beta-3 chain">
    <location>
        <begin position="1"/>
        <end position="20"/>
    </location>
</feature>
<feature type="strand" evidence="2">
    <location>
        <begin position="10"/>
        <end position="16"/>
    </location>
</feature>
<dbReference type="PDB" id="1M26">
    <property type="method" value="X-ray"/>
    <property type="resolution" value="1.62 A"/>
    <property type="chains" value="B/D/F/H=4-18"/>
</dbReference>
<dbReference type="PDB" id="1PXD">
    <property type="method" value="X-ray"/>
    <property type="resolution" value="1.80 A"/>
    <property type="chains" value="B=1-20"/>
</dbReference>
<dbReference type="PDB" id="1TOQ">
    <property type="method" value="X-ray"/>
    <property type="resolution" value="2.50 A"/>
    <property type="chains" value="B/D/F/H=1-20"/>
</dbReference>
<dbReference type="PDB" id="1TP8">
    <property type="method" value="X-ray"/>
    <property type="resolution" value="3.00 A"/>
    <property type="chains" value="B/D/F/H=1-20"/>
</dbReference>
<dbReference type="PDB" id="1UGW">
    <property type="method" value="X-ray"/>
    <property type="resolution" value="1.70 A"/>
    <property type="chains" value="B/D/F/H=1-18"/>
</dbReference>
<dbReference type="PDB" id="1UGX">
    <property type="method" value="X-ray"/>
    <property type="resolution" value="1.60 A"/>
    <property type="chains" value="B=1-20"/>
</dbReference>
<dbReference type="PDB" id="1UGY">
    <property type="method" value="X-ray"/>
    <property type="resolution" value="2.40 A"/>
    <property type="chains" value="B/D/F/H=1-18"/>
</dbReference>
<dbReference type="PDB" id="1UH0">
    <property type="method" value="X-ray"/>
    <property type="resolution" value="2.80 A"/>
    <property type="chains" value="B/D/F/H=1-20"/>
</dbReference>
<dbReference type="PDB" id="1UH1">
    <property type="method" value="X-ray"/>
    <property type="resolution" value="2.80 A"/>
    <property type="chains" value="B/D/F/H=1-20"/>
</dbReference>
<dbReference type="PDB" id="1WS4">
    <property type="method" value="X-ray"/>
    <property type="resolution" value="1.90 A"/>
    <property type="chains" value="B/D/F/H=1-18"/>
</dbReference>
<dbReference type="PDB" id="1WS5">
    <property type="method" value="X-ray"/>
    <property type="resolution" value="1.90 A"/>
    <property type="chains" value="B/D/F/H=1-18"/>
</dbReference>
<dbReference type="PDB" id="4R6N">
    <property type="method" value="X-ray"/>
    <property type="resolution" value="1.67 A"/>
    <property type="chains" value="B/D/F/H=2-20"/>
</dbReference>
<dbReference type="PDB" id="4R6O">
    <property type="method" value="X-ray"/>
    <property type="resolution" value="1.60 A"/>
    <property type="chains" value="B/D/F/H=2-20"/>
</dbReference>
<dbReference type="PDB" id="4R6P">
    <property type="method" value="X-ray"/>
    <property type="resolution" value="1.70 A"/>
    <property type="chains" value="B/D/F/H=2-20"/>
</dbReference>
<dbReference type="PDB" id="4R6Q">
    <property type="method" value="X-ray"/>
    <property type="resolution" value="1.60 A"/>
    <property type="chains" value="B/D/F/H=2-20"/>
</dbReference>
<dbReference type="PDB" id="4R6R">
    <property type="method" value="X-ray"/>
    <property type="resolution" value="1.38 A"/>
    <property type="chains" value="B/D/F/H=2-20"/>
</dbReference>
<dbReference type="PDB" id="5J4T">
    <property type="method" value="X-ray"/>
    <property type="resolution" value="1.94 A"/>
    <property type="chains" value="B/D/F/H=2-20"/>
</dbReference>
<dbReference type="PDB" id="5J4X">
    <property type="method" value="X-ray"/>
    <property type="resolution" value="1.65 A"/>
    <property type="chains" value="B/D/F/H=2-20"/>
</dbReference>
<dbReference type="PDB" id="5J50">
    <property type="method" value="X-ray"/>
    <property type="resolution" value="2.05 A"/>
    <property type="chains" value="B/D/F/H=2-20"/>
</dbReference>
<dbReference type="PDB" id="5J51">
    <property type="method" value="X-ray"/>
    <property type="resolution" value="1.67 A"/>
    <property type="chains" value="B/D/F/H=2-20"/>
</dbReference>
<dbReference type="PDB" id="5JM1">
    <property type="method" value="X-ray"/>
    <property type="resolution" value="1.95 A"/>
    <property type="chains" value="B/D/F/H=2-20"/>
</dbReference>
<dbReference type="PDBsum" id="1M26"/>
<dbReference type="PDBsum" id="1PXD"/>
<dbReference type="PDBsum" id="1TOQ"/>
<dbReference type="PDBsum" id="1TP8"/>
<dbReference type="PDBsum" id="1UGW"/>
<dbReference type="PDBsum" id="1UGX"/>
<dbReference type="PDBsum" id="1UGY"/>
<dbReference type="PDBsum" id="1UH0"/>
<dbReference type="PDBsum" id="1UH1"/>
<dbReference type="PDBsum" id="1WS4"/>
<dbReference type="PDBsum" id="1WS5"/>
<dbReference type="PDBsum" id="4R6N"/>
<dbReference type="PDBsum" id="4R6O"/>
<dbReference type="PDBsum" id="4R6P"/>
<dbReference type="PDBsum" id="4R6Q"/>
<dbReference type="PDBsum" id="4R6R"/>
<dbReference type="PDBsum" id="5J4T"/>
<dbReference type="PDBsum" id="5J4X"/>
<dbReference type="PDBsum" id="5J50"/>
<dbReference type="PDBsum" id="5J51"/>
<dbReference type="PDBsum" id="5JM1"/>
<dbReference type="SMR" id="P18673"/>
<dbReference type="GO" id="GO:0030246">
    <property type="term" value="F:carbohydrate binding"/>
    <property type="evidence" value="ECO:0000250"/>
    <property type="project" value="UniProtKB"/>
</dbReference>
<dbReference type="GO" id="GO:0019862">
    <property type="term" value="F:IgA binding"/>
    <property type="evidence" value="ECO:0000250"/>
    <property type="project" value="UniProtKB"/>
</dbReference>
<comment type="function">
    <text>D-galactose-specific lectin, binds the T-antigen structure Gal-beta1,3-GalNAc (Thomsen-Friedenreich-antigen-specific lectin). Potent and selective stimulant of distinct T- and B-cell functions. Shows a unique ability to specifically recognize IgA-1 from human serum.</text>
</comment>
<comment type="subunit">
    <text>Tetramer of four alpha chains associated with two or four beta chains.</text>
</comment>
<comment type="similarity">
    <text evidence="1">Belongs to the jacalin lectin family.</text>
</comment>
<name>LECB3_ARTIN</name>
<sequence>DEQSGISQTVIVGPWGAKVS</sequence>
<reference key="1">
    <citation type="journal article" date="1989" name="Arch. Biochem. Biophys.">
        <title>Homology of the D-galactose-specific lectins from Artocarpus integrifolia and Maclura pomifera and the role of an unusual small polypeptide subunit.</title>
        <authorList>
            <person name="Young N.M."/>
            <person name="Johnston R.A.Z."/>
            <person name="Szabo A.G."/>
            <person name="Watson D.C."/>
        </authorList>
    </citation>
    <scope>PROTEIN SEQUENCE</scope>
    <source>
        <tissue>Seed</tissue>
    </source>
</reference>
<reference key="2">
    <citation type="journal article" date="1992" name="Biochem. J.">
        <title>Primary structure of a Thomsen-Friedenreich-antigen-specific lectin, jacalin [Artocarpus integrifolia (jack fruit) agglutinin]. Evidence for the presence of an internal repeat.</title>
        <authorList>
            <person name="Mahanta S.K."/>
            <person name="Sanker S."/>
            <person name="Prasad Rao N.V.S.A.V."/>
            <person name="Swamy M.J."/>
            <person name="Surolia A."/>
        </authorList>
    </citation>
    <scope>PROTEIN SEQUENCE</scope>
</reference>
<accession>P18673</accession>
<keyword id="KW-0002">3D-structure</keyword>
<keyword id="KW-0903">Direct protein sequencing</keyword>
<keyword id="KW-0388">IgA-binding protein</keyword>
<keyword id="KW-0430">Lectin</keyword>
<evidence type="ECO:0000305" key="1"/>
<evidence type="ECO:0007829" key="2">
    <source>
        <dbReference type="PDB" id="4R6R"/>
    </source>
</evidence>
<organism>
    <name type="scientific">Artocarpus integer</name>
    <name type="common">Jack fruit</name>
    <name type="synonym">Artocarpus integrifolia</name>
    <dbReference type="NCBI Taxonomy" id="3490"/>
    <lineage>
        <taxon>Eukaryota</taxon>
        <taxon>Viridiplantae</taxon>
        <taxon>Streptophyta</taxon>
        <taxon>Embryophyta</taxon>
        <taxon>Tracheophyta</taxon>
        <taxon>Spermatophyta</taxon>
        <taxon>Magnoliopsida</taxon>
        <taxon>eudicotyledons</taxon>
        <taxon>Gunneridae</taxon>
        <taxon>Pentapetalae</taxon>
        <taxon>rosids</taxon>
        <taxon>fabids</taxon>
        <taxon>Rosales</taxon>
        <taxon>Moraceae</taxon>
        <taxon>Artocarpeae</taxon>
        <taxon>Artocarpus</taxon>
    </lineage>
</organism>
<proteinExistence type="evidence at protein level"/>
<protein>
    <recommendedName>
        <fullName>Agglutinin beta-3 chain</fullName>
    </recommendedName>
    <alternativeName>
        <fullName>Jacalin beta-3 chain</fullName>
    </alternativeName>
</protein>